<keyword id="KW-1017">Isopeptide bond</keyword>
<keyword id="KW-0436">Ligase</keyword>
<keyword id="KW-1185">Reference proteome</keyword>
<keyword id="KW-0832">Ubl conjugation</keyword>
<evidence type="ECO:0000269" key="1">
    <source>
    </source>
</evidence>
<evidence type="ECO:0000305" key="2"/>
<reference key="1">
    <citation type="journal article" date="1998" name="Nature">
        <title>Deciphering the biology of Mycobacterium tuberculosis from the complete genome sequence.</title>
        <authorList>
            <person name="Cole S.T."/>
            <person name="Brosch R."/>
            <person name="Parkhill J."/>
            <person name="Garnier T."/>
            <person name="Churcher C.M."/>
            <person name="Harris D.E."/>
            <person name="Gordon S.V."/>
            <person name="Eiglmeier K."/>
            <person name="Gas S."/>
            <person name="Barry C.E. III"/>
            <person name="Tekaia F."/>
            <person name="Badcock K."/>
            <person name="Basham D."/>
            <person name="Brown D."/>
            <person name="Chillingworth T."/>
            <person name="Connor R."/>
            <person name="Davies R.M."/>
            <person name="Devlin K."/>
            <person name="Feltwell T."/>
            <person name="Gentles S."/>
            <person name="Hamlin N."/>
            <person name="Holroyd S."/>
            <person name="Hornsby T."/>
            <person name="Jagels K."/>
            <person name="Krogh A."/>
            <person name="McLean J."/>
            <person name="Moule S."/>
            <person name="Murphy L.D."/>
            <person name="Oliver S."/>
            <person name="Osborne J."/>
            <person name="Quail M.A."/>
            <person name="Rajandream M.A."/>
            <person name="Rogers J."/>
            <person name="Rutter S."/>
            <person name="Seeger K."/>
            <person name="Skelton S."/>
            <person name="Squares S."/>
            <person name="Squares R."/>
            <person name="Sulston J.E."/>
            <person name="Taylor K."/>
            <person name="Whitehead S."/>
            <person name="Barrell B.G."/>
        </authorList>
    </citation>
    <scope>NUCLEOTIDE SEQUENCE [LARGE SCALE GENOMIC DNA]</scope>
    <source>
        <strain>ATCC 25618 / H37Rv</strain>
    </source>
</reference>
<reference key="2">
    <citation type="journal article" date="2010" name="PLoS ONE">
        <title>Prokaryotic ubiquitin-like protein (Pup) proteome of Mycobacterium tuberculosis.</title>
        <authorList>
            <person name="Festa R.A."/>
            <person name="McAllister F."/>
            <person name="Pearce M.J."/>
            <person name="Mintseris J."/>
            <person name="Burns K.E."/>
            <person name="Gygi S.P."/>
            <person name="Darwin K.H."/>
        </authorList>
    </citation>
    <scope>PUPYLATION AT LYS-528</scope>
    <scope>IDENTIFICATION BY MASS SPECTROMETRY</scope>
    <source>
        <strain>ATCC 25618 / H37Rv</strain>
    </source>
</reference>
<reference key="3">
    <citation type="journal article" date="2011" name="Mol. Cell. Proteomics">
        <title>Proteogenomic analysis of Mycobacterium tuberculosis by high resolution mass spectrometry.</title>
        <authorList>
            <person name="Kelkar D.S."/>
            <person name="Kumar D."/>
            <person name="Kumar P."/>
            <person name="Balakrishnan L."/>
            <person name="Muthusamy B."/>
            <person name="Yadav A.K."/>
            <person name="Shrivastava P."/>
            <person name="Marimuthu A."/>
            <person name="Anand S."/>
            <person name="Sundaram H."/>
            <person name="Kingsbury R."/>
            <person name="Harsha H.C."/>
            <person name="Nair B."/>
            <person name="Prasad T.S."/>
            <person name="Chauhan D.S."/>
            <person name="Katoch K."/>
            <person name="Katoch V.M."/>
            <person name="Kumar P."/>
            <person name="Chaerkady R."/>
            <person name="Ramachandran S."/>
            <person name="Dash D."/>
            <person name="Pandey A."/>
        </authorList>
    </citation>
    <scope>IDENTIFICATION BY MASS SPECTROMETRY [LARGE SCALE ANALYSIS]</scope>
    <source>
        <strain>ATCC 25618 / H37Rv</strain>
    </source>
</reference>
<protein>
    <recommendedName>
        <fullName>Putative ligase Rv1013</fullName>
        <ecNumber>6.2.1.-</ecNumber>
    </recommendedName>
</protein>
<feature type="chain" id="PRO_0000395881" description="Putative ligase Rv1013">
    <location>
        <begin position="1"/>
        <end position="544"/>
    </location>
</feature>
<feature type="cross-link" description="Isoglutamyl lysine isopeptide (Lys-Gln) (interchain with Q-Cter in protein Pup)" evidence="1">
    <location>
        <position position="528"/>
    </location>
</feature>
<accession>O05598</accession>
<accession>L0T866</accession>
<proteinExistence type="evidence at protein level"/>
<organism>
    <name type="scientific">Mycobacterium tuberculosis (strain ATCC 25618 / H37Rv)</name>
    <dbReference type="NCBI Taxonomy" id="83332"/>
    <lineage>
        <taxon>Bacteria</taxon>
        <taxon>Bacillati</taxon>
        <taxon>Actinomycetota</taxon>
        <taxon>Actinomycetes</taxon>
        <taxon>Mycobacteriales</taxon>
        <taxon>Mycobacteriaceae</taxon>
        <taxon>Mycobacterium</taxon>
        <taxon>Mycobacterium tuberculosis complex</taxon>
    </lineage>
</organism>
<comment type="PTM">
    <text evidence="1">Pupylated at Lys-528 by the prokaryotic ubiquitin-like protein Pup, which probably leads to its degradation by the proteasome.</text>
</comment>
<comment type="similarity">
    <text evidence="2">Belongs to the ATP-dependent AMP-binding enzyme family.</text>
</comment>
<gene>
    <name type="primary">pks16</name>
    <name type="ordered locus">Rv1013</name>
</gene>
<name>Y1013_MYCTU</name>
<dbReference type="EC" id="6.2.1.-"/>
<dbReference type="EMBL" id="AL123456">
    <property type="protein sequence ID" value="CCP43763.1"/>
    <property type="molecule type" value="Genomic_DNA"/>
</dbReference>
<dbReference type="PIR" id="H70603">
    <property type="entry name" value="H70603"/>
</dbReference>
<dbReference type="RefSeq" id="NP_215529.1">
    <property type="nucleotide sequence ID" value="NC_000962.3"/>
</dbReference>
<dbReference type="RefSeq" id="WP_003405202.1">
    <property type="nucleotide sequence ID" value="NZ_NVQJ01000018.1"/>
</dbReference>
<dbReference type="SMR" id="O05598"/>
<dbReference type="FunCoup" id="O05598">
    <property type="interactions" value="2"/>
</dbReference>
<dbReference type="STRING" id="83332.Rv1013"/>
<dbReference type="PaxDb" id="83332-Rv1013"/>
<dbReference type="DNASU" id="886035"/>
<dbReference type="GeneID" id="886035"/>
<dbReference type="KEGG" id="mtu:Rv1013"/>
<dbReference type="KEGG" id="mtv:RVBD_1013"/>
<dbReference type="TubercuList" id="Rv1013"/>
<dbReference type="eggNOG" id="COG0318">
    <property type="taxonomic scope" value="Bacteria"/>
</dbReference>
<dbReference type="InParanoid" id="O05598"/>
<dbReference type="OrthoDB" id="3671040at2"/>
<dbReference type="PhylomeDB" id="O05598"/>
<dbReference type="Proteomes" id="UP000001584">
    <property type="component" value="Chromosome"/>
</dbReference>
<dbReference type="GO" id="GO:0009274">
    <property type="term" value="C:peptidoglycan-based cell wall"/>
    <property type="evidence" value="ECO:0007005"/>
    <property type="project" value="MTBBASE"/>
</dbReference>
<dbReference type="GO" id="GO:0005886">
    <property type="term" value="C:plasma membrane"/>
    <property type="evidence" value="ECO:0007005"/>
    <property type="project" value="MTBBASE"/>
</dbReference>
<dbReference type="GO" id="GO:0070566">
    <property type="term" value="F:adenylyltransferase activity"/>
    <property type="evidence" value="ECO:0000318"/>
    <property type="project" value="GO_Central"/>
</dbReference>
<dbReference type="GO" id="GO:0016874">
    <property type="term" value="F:ligase activity"/>
    <property type="evidence" value="ECO:0007669"/>
    <property type="project" value="UniProtKB-KW"/>
</dbReference>
<dbReference type="GO" id="GO:0006633">
    <property type="term" value="P:fatty acid biosynthetic process"/>
    <property type="evidence" value="ECO:0000318"/>
    <property type="project" value="GO_Central"/>
</dbReference>
<dbReference type="CDD" id="cd05931">
    <property type="entry name" value="FAAL"/>
    <property type="match status" value="1"/>
</dbReference>
<dbReference type="FunFam" id="3.30.300.30:FF:000013">
    <property type="entry name" value="Long-chain fatty acid--CoA ligase"/>
    <property type="match status" value="1"/>
</dbReference>
<dbReference type="FunFam" id="3.40.50.12780:FF:000033">
    <property type="entry name" value="Long-chain fatty acid--CoA ligase"/>
    <property type="match status" value="1"/>
</dbReference>
<dbReference type="Gene3D" id="3.30.300.30">
    <property type="match status" value="1"/>
</dbReference>
<dbReference type="Gene3D" id="3.40.50.12780">
    <property type="entry name" value="N-terminal domain of ligase-like"/>
    <property type="match status" value="1"/>
</dbReference>
<dbReference type="InterPro" id="IPR045851">
    <property type="entry name" value="AMP-bd_C_sf"/>
</dbReference>
<dbReference type="InterPro" id="IPR020845">
    <property type="entry name" value="AMP-binding_CS"/>
</dbReference>
<dbReference type="InterPro" id="IPR000873">
    <property type="entry name" value="AMP-dep_synth/lig_dom"/>
</dbReference>
<dbReference type="InterPro" id="IPR042099">
    <property type="entry name" value="ANL_N_sf"/>
</dbReference>
<dbReference type="InterPro" id="IPR040097">
    <property type="entry name" value="FAAL/FAAC"/>
</dbReference>
<dbReference type="NCBIfam" id="NF005850">
    <property type="entry name" value="PRK07768.1"/>
    <property type="match status" value="1"/>
</dbReference>
<dbReference type="PANTHER" id="PTHR22754:SF32">
    <property type="entry name" value="DISCO-INTERACTING PROTEIN 2"/>
    <property type="match status" value="1"/>
</dbReference>
<dbReference type="PANTHER" id="PTHR22754">
    <property type="entry name" value="DISCO-INTERACTING PROTEIN 2 DIP2 -RELATED"/>
    <property type="match status" value="1"/>
</dbReference>
<dbReference type="Pfam" id="PF00501">
    <property type="entry name" value="AMP-binding"/>
    <property type="match status" value="1"/>
</dbReference>
<dbReference type="SUPFAM" id="SSF56801">
    <property type="entry name" value="Acetyl-CoA synthetase-like"/>
    <property type="match status" value="1"/>
</dbReference>
<dbReference type="PROSITE" id="PS00455">
    <property type="entry name" value="AMP_BINDING"/>
    <property type="match status" value="1"/>
</dbReference>
<sequence>MSRFTEKMFHNARTATTGMVTGEPHMPVRHTWGEVHERARCIAGGLAAAGVGLGDVVGVLAGFPVEIAPTAQALWMRGASLTMLHQPTPRTDLAVWAEDTMTVIGMIEAKAVIVSEPFLVAIPILEQKGMQVLTVADLLASDPIGPIEVGEDDLALMQLTSGSTGSPKAVQITHRNIYSNAEAMFVGAQYDVDKDVMVSWLPCFHDMGMVGFLTIPMFFGAELVKVTPMDFLRDTLLWAKLIDKYQGTMTAAPNFAYALLAKRLRRQAKPGDFDLSTLRFALSGAEPVEPADVEDLLDAGKPFGLRPSAILPAYGMAETTLAVSFSECNAGLVVDEVDADLLAALRRAVPATKGNTRRLATLGPLLQDLEARIIDEQGDVMPARGVGVIELRGESLTPGYLTMGGFIPAQDEHGWYDTGDLGYLTEEGHVVVCGRVKDVIIMAGRNIYPTDIERAAGRVDGVRPGCAVAVRLDAGHSRESFAVAVESNAFEDPAEVRRIEHQVAHEVVAEVDVRPRNVVVLGPGTIPKTPSGKLRRANSVTLVT</sequence>